<protein>
    <recommendedName>
        <fullName>Ribonuclease 4</fullName>
        <shortName>RNase 4</shortName>
        <ecNumber evidence="4">3.1.27.-</ecNumber>
    </recommendedName>
</protein>
<feature type="signal peptide" evidence="1">
    <location>
        <begin position="1"/>
        <end position="28"/>
    </location>
</feature>
<feature type="chain" id="PRO_0000045837" description="Ribonuclease 4">
    <location>
        <begin position="29"/>
        <end position="147"/>
    </location>
</feature>
<feature type="active site" description="Proton acceptor" evidence="5">
    <location>
        <position position="40"/>
    </location>
</feature>
<feature type="active site" description="Proton donor" evidence="5">
    <location>
        <position position="144"/>
    </location>
</feature>
<feature type="binding site" evidence="3">
    <location>
        <position position="35"/>
    </location>
    <ligand>
        <name>dUMP</name>
        <dbReference type="ChEBI" id="CHEBI:246422"/>
    </ligand>
</feature>
<feature type="binding site" evidence="3">
    <location>
        <position position="40"/>
    </location>
    <ligand>
        <name>dUMP</name>
        <dbReference type="ChEBI" id="CHEBI:246422"/>
    </ligand>
</feature>
<feature type="binding site" evidence="3">
    <location>
        <position position="68"/>
    </location>
    <ligand>
        <name>dUMP</name>
        <dbReference type="ChEBI" id="CHEBI:246422"/>
    </ligand>
</feature>
<feature type="binding site" evidence="3">
    <location>
        <position position="71"/>
    </location>
    <ligand>
        <name>dUMP</name>
        <dbReference type="ChEBI" id="CHEBI:246422"/>
    </ligand>
</feature>
<feature type="binding site" evidence="3">
    <location>
        <position position="72"/>
    </location>
    <ligand>
        <name>dUMP</name>
        <dbReference type="ChEBI" id="CHEBI:246422"/>
    </ligand>
</feature>
<feature type="binding site" evidence="3">
    <location>
        <position position="145"/>
    </location>
    <ligand>
        <name>dUMP</name>
        <dbReference type="ChEBI" id="CHEBI:246422"/>
    </ligand>
</feature>
<feature type="modified residue" description="Pyrrolidone carboxylic acid" evidence="2">
    <location>
        <position position="29"/>
    </location>
</feature>
<feature type="disulfide bond" evidence="4">
    <location>
        <begin position="53"/>
        <end position="109"/>
    </location>
</feature>
<feature type="disulfide bond" evidence="4">
    <location>
        <begin position="67"/>
        <end position="120"/>
    </location>
</feature>
<feature type="disulfide bond" evidence="4">
    <location>
        <begin position="85"/>
        <end position="135"/>
    </location>
</feature>
<feature type="disulfide bond" evidence="4">
    <location>
        <begin position="92"/>
        <end position="99"/>
    </location>
</feature>
<proteinExistence type="evidence at transcript level"/>
<name>RNAS4_PONAB</name>
<organism>
    <name type="scientific">Pongo abelii</name>
    <name type="common">Sumatran orangutan</name>
    <name type="synonym">Pongo pygmaeus abelii</name>
    <dbReference type="NCBI Taxonomy" id="9601"/>
    <lineage>
        <taxon>Eukaryota</taxon>
        <taxon>Metazoa</taxon>
        <taxon>Chordata</taxon>
        <taxon>Craniata</taxon>
        <taxon>Vertebrata</taxon>
        <taxon>Euteleostomi</taxon>
        <taxon>Mammalia</taxon>
        <taxon>Eutheria</taxon>
        <taxon>Euarchontoglires</taxon>
        <taxon>Primates</taxon>
        <taxon>Haplorrhini</taxon>
        <taxon>Catarrhini</taxon>
        <taxon>Hominidae</taxon>
        <taxon>Pongo</taxon>
    </lineage>
</organism>
<keyword id="KW-0044">Antibiotic</keyword>
<keyword id="KW-0929">Antimicrobial</keyword>
<keyword id="KW-1015">Disulfide bond</keyword>
<keyword id="KW-0255">Endonuclease</keyword>
<keyword id="KW-0378">Hydrolase</keyword>
<keyword id="KW-0540">Nuclease</keyword>
<keyword id="KW-0873">Pyrrolidone carboxylic acid</keyword>
<keyword id="KW-1185">Reference proteome</keyword>
<keyword id="KW-0964">Secreted</keyword>
<keyword id="KW-0732">Signal</keyword>
<sequence length="147" mass="16855">MALQRTHSLLLLLLLTLLGLGLVQPSYGQDGMYQRFLRQHVHPEETGGNDRYCNLMMQRRKMTLYHCKRFNTFIHEDIWNIRSICSTTNIQCKNGKTNCHEGVVKVTDCRDTGSSRAPNCRYRAMASTRRVVIACEGNPQVPVHFDG</sequence>
<dbReference type="EC" id="3.1.27.-" evidence="4"/>
<dbReference type="EMBL" id="CR925928">
    <property type="protein sequence ID" value="CAI29589.1"/>
    <property type="molecule type" value="mRNA"/>
</dbReference>
<dbReference type="RefSeq" id="NP_001127675.1">
    <property type="nucleotide sequence ID" value="NM_001134203.2"/>
</dbReference>
<dbReference type="RefSeq" id="XP_009247114.1">
    <property type="nucleotide sequence ID" value="XM_009248839.1"/>
</dbReference>
<dbReference type="RefSeq" id="XP_063571361.1">
    <property type="nucleotide sequence ID" value="XM_063715291.1"/>
</dbReference>
<dbReference type="RefSeq" id="XP_063571362.1">
    <property type="nucleotide sequence ID" value="XM_063715292.1"/>
</dbReference>
<dbReference type="RefSeq" id="XP_063571363.1">
    <property type="nucleotide sequence ID" value="XM_063715293.1"/>
</dbReference>
<dbReference type="SMR" id="Q5NVS4"/>
<dbReference type="FunCoup" id="Q5NVS4">
    <property type="interactions" value="373"/>
</dbReference>
<dbReference type="Ensembl" id="ENSPPYT00000006595.2">
    <property type="protein sequence ID" value="ENSPPYP00000006341.1"/>
    <property type="gene ID" value="ENSPPYG00000005573.2"/>
</dbReference>
<dbReference type="GeneID" id="100174757"/>
<dbReference type="KEGG" id="pon:100174757"/>
<dbReference type="CTD" id="6038"/>
<dbReference type="eggNOG" id="ENOG502S9Q1">
    <property type="taxonomic scope" value="Eukaryota"/>
</dbReference>
<dbReference type="GeneTree" id="ENSGT00940000157645"/>
<dbReference type="HOGENOM" id="CLU_117006_3_1_1"/>
<dbReference type="InParanoid" id="Q5NVS4"/>
<dbReference type="OMA" id="ATSHHCK"/>
<dbReference type="TreeFam" id="TF333393"/>
<dbReference type="Proteomes" id="UP000001595">
    <property type="component" value="Chromosome 14"/>
</dbReference>
<dbReference type="GO" id="GO:0005615">
    <property type="term" value="C:extracellular space"/>
    <property type="evidence" value="ECO:0000250"/>
    <property type="project" value="UniProtKB"/>
</dbReference>
<dbReference type="GO" id="GO:0004519">
    <property type="term" value="F:endonuclease activity"/>
    <property type="evidence" value="ECO:0007669"/>
    <property type="project" value="UniProtKB-KW"/>
</dbReference>
<dbReference type="GO" id="GO:0003676">
    <property type="term" value="F:nucleic acid binding"/>
    <property type="evidence" value="ECO:0007669"/>
    <property type="project" value="InterPro"/>
</dbReference>
<dbReference type="GO" id="GO:0004540">
    <property type="term" value="F:RNA nuclease activity"/>
    <property type="evidence" value="ECO:0007669"/>
    <property type="project" value="Ensembl"/>
</dbReference>
<dbReference type="GO" id="GO:0019731">
    <property type="term" value="P:antibacterial humoral response"/>
    <property type="evidence" value="ECO:0000250"/>
    <property type="project" value="UniProtKB"/>
</dbReference>
<dbReference type="GO" id="GO:0050830">
    <property type="term" value="P:defense response to Gram-positive bacterium"/>
    <property type="evidence" value="ECO:0007669"/>
    <property type="project" value="TreeGrafter"/>
</dbReference>
<dbReference type="CDD" id="cd06265">
    <property type="entry name" value="RNase_A_canonical"/>
    <property type="match status" value="1"/>
</dbReference>
<dbReference type="FunFam" id="3.10.130.10:FF:000001">
    <property type="entry name" value="Ribonuclease pancreatic"/>
    <property type="match status" value="1"/>
</dbReference>
<dbReference type="Gene3D" id="3.10.130.10">
    <property type="entry name" value="Ribonuclease A-like domain"/>
    <property type="match status" value="1"/>
</dbReference>
<dbReference type="InterPro" id="IPR001427">
    <property type="entry name" value="RNaseA"/>
</dbReference>
<dbReference type="InterPro" id="IPR036816">
    <property type="entry name" value="RNaseA-like_dom_sf"/>
</dbReference>
<dbReference type="InterPro" id="IPR023411">
    <property type="entry name" value="RNaseA_AS"/>
</dbReference>
<dbReference type="InterPro" id="IPR023412">
    <property type="entry name" value="RNaseA_domain"/>
</dbReference>
<dbReference type="PANTHER" id="PTHR11437">
    <property type="entry name" value="RIBONUCLEASE"/>
    <property type="match status" value="1"/>
</dbReference>
<dbReference type="PANTHER" id="PTHR11437:SF53">
    <property type="entry name" value="RIBONUCLEASE 4"/>
    <property type="match status" value="1"/>
</dbReference>
<dbReference type="Pfam" id="PF00074">
    <property type="entry name" value="RnaseA"/>
    <property type="match status" value="1"/>
</dbReference>
<dbReference type="PRINTS" id="PR00794">
    <property type="entry name" value="RIBONUCLEASE"/>
</dbReference>
<dbReference type="SMART" id="SM00092">
    <property type="entry name" value="RNAse_Pc"/>
    <property type="match status" value="1"/>
</dbReference>
<dbReference type="SUPFAM" id="SSF54076">
    <property type="entry name" value="RNase A-like"/>
    <property type="match status" value="1"/>
</dbReference>
<dbReference type="PROSITE" id="PS00127">
    <property type="entry name" value="RNASE_PANCREATIC"/>
    <property type="match status" value="1"/>
</dbReference>
<accession>Q5NVS4</accession>
<reference key="1">
    <citation type="submission" date="2004-11" db="EMBL/GenBank/DDBJ databases">
        <authorList>
            <consortium name="The German cDNA consortium"/>
        </authorList>
    </citation>
    <scope>NUCLEOTIDE SEQUENCE [LARGE SCALE MRNA]</scope>
    <source>
        <tissue>Liver</tissue>
    </source>
</reference>
<gene>
    <name type="primary">RNASE4</name>
</gene>
<comment type="function">
    <text evidence="4">Cleaves preferentially after uridine bases. Has antimicrobial activity against uropathogenic E.coli (UPEC). Probably contributes to urinary tract sterility.</text>
</comment>
<comment type="subcellular location">
    <subcellularLocation>
        <location evidence="4">Secreted</location>
    </subcellularLocation>
    <text evidence="4">Detected in urine.</text>
</comment>
<comment type="similarity">
    <text evidence="6">Belongs to the pancreatic ribonuclease family.</text>
</comment>
<evidence type="ECO:0000250" key="1"/>
<evidence type="ECO:0000250" key="2">
    <source>
        <dbReference type="UniProtKB" id="P15467"/>
    </source>
</evidence>
<evidence type="ECO:0000250" key="3">
    <source>
        <dbReference type="UniProtKB" id="P15468"/>
    </source>
</evidence>
<evidence type="ECO:0000250" key="4">
    <source>
        <dbReference type="UniProtKB" id="P34096"/>
    </source>
</evidence>
<evidence type="ECO:0000250" key="5">
    <source>
        <dbReference type="UniProtKB" id="Q9H1E1"/>
    </source>
</evidence>
<evidence type="ECO:0000305" key="6"/>